<accession>Q4L5B3</accession>
<keyword id="KW-0067">ATP-binding</keyword>
<keyword id="KW-1003">Cell membrane</keyword>
<keyword id="KW-0472">Membrane</keyword>
<keyword id="KW-0547">Nucleotide-binding</keyword>
<keyword id="KW-1278">Translocase</keyword>
<keyword id="KW-0813">Transport</keyword>
<evidence type="ECO:0000255" key="1">
    <source>
        <dbReference type="HAMAP-Rule" id="MF_01726"/>
    </source>
</evidence>
<comment type="function">
    <text evidence="1">Part of the ABC transporter complex PotABCD involved in spermidine/putrescine import. Responsible for energy coupling to the transport system.</text>
</comment>
<comment type="catalytic activity">
    <reaction evidence="1">
        <text>ATP + H2O + polyamine-[polyamine-binding protein]Side 1 = ADP + phosphate + polyamineSide 2 + [polyamine-binding protein]Side 1.</text>
        <dbReference type="EC" id="7.6.2.11"/>
    </reaction>
</comment>
<comment type="subunit">
    <text evidence="1">The complex is composed of two ATP-binding proteins (PotA), two transmembrane proteins (PotB and PotC) and a solute-binding protein (PotD).</text>
</comment>
<comment type="subcellular location">
    <subcellularLocation>
        <location evidence="1">Cell membrane</location>
        <topology evidence="1">Peripheral membrane protein</topology>
    </subcellularLocation>
</comment>
<comment type="similarity">
    <text evidence="1">Belongs to the ABC transporter superfamily. Spermidine/putrescine importer (TC 3.A.1.11.1) family.</text>
</comment>
<gene>
    <name evidence="1" type="primary">potA</name>
    <name type="ordered locus">SH1853</name>
</gene>
<organism>
    <name type="scientific">Staphylococcus haemolyticus (strain JCSC1435)</name>
    <dbReference type="NCBI Taxonomy" id="279808"/>
    <lineage>
        <taxon>Bacteria</taxon>
        <taxon>Bacillati</taxon>
        <taxon>Bacillota</taxon>
        <taxon>Bacilli</taxon>
        <taxon>Bacillales</taxon>
        <taxon>Staphylococcaceae</taxon>
        <taxon>Staphylococcus</taxon>
    </lineage>
</organism>
<protein>
    <recommendedName>
        <fullName evidence="1">Spermidine/putrescine import ATP-binding protein PotA</fullName>
        <ecNumber evidence="1">7.6.2.11</ecNumber>
    </recommendedName>
</protein>
<sequence length="364" mass="41192">MEPLLSFKGVTKGFDDVTILNKMDLEIESGHFYTLLGPSGCGKTTILKLIAGFEQPDDGDIIYLNKSIGELPANKRKVNTVFQDYALFPHLNVYDNIAFGLKLKKHSKKDIDKKVIDALKLVKLSGYEQRNINEMSGGQKQRVAIARAIVNEPEILLLDESLSALDLKLRTEMQYELRELQKRLGITFIFVTHDQEEALALSDYIFVMKDGKIQQFGTPTDIYDEPVNRFVADFIGESNIVEGKMVEDFVVNIYGQDFECVDAGIPSGKNVEVVIRPEDISLIEADKGLFKATVDSMLFRGVHYEICCIDRKGYEWVIQTTKKAEVGSEVGLYFDPEAIHIMVPGETEEEFDKRIESYEEFDNA</sequence>
<reference key="1">
    <citation type="journal article" date="2005" name="J. Bacteriol.">
        <title>Whole-genome sequencing of Staphylococcus haemolyticus uncovers the extreme plasticity of its genome and the evolution of human-colonizing staphylococcal species.</title>
        <authorList>
            <person name="Takeuchi F."/>
            <person name="Watanabe S."/>
            <person name="Baba T."/>
            <person name="Yuzawa H."/>
            <person name="Ito T."/>
            <person name="Morimoto Y."/>
            <person name="Kuroda M."/>
            <person name="Cui L."/>
            <person name="Takahashi M."/>
            <person name="Ankai A."/>
            <person name="Baba S."/>
            <person name="Fukui S."/>
            <person name="Lee J.C."/>
            <person name="Hiramatsu K."/>
        </authorList>
    </citation>
    <scope>NUCLEOTIDE SEQUENCE [LARGE SCALE GENOMIC DNA]</scope>
    <source>
        <strain>JCSC1435</strain>
    </source>
</reference>
<feature type="chain" id="PRO_0000286296" description="Spermidine/putrescine import ATP-binding protein PotA">
    <location>
        <begin position="1"/>
        <end position="364"/>
    </location>
</feature>
<feature type="domain" description="ABC transporter" evidence="1">
    <location>
        <begin position="5"/>
        <end position="235"/>
    </location>
</feature>
<feature type="binding site" evidence="1">
    <location>
        <begin position="37"/>
        <end position="44"/>
    </location>
    <ligand>
        <name>ATP</name>
        <dbReference type="ChEBI" id="CHEBI:30616"/>
    </ligand>
</feature>
<dbReference type="EC" id="7.6.2.11" evidence="1"/>
<dbReference type="EMBL" id="AP006716">
    <property type="protein sequence ID" value="BAE05162.1"/>
    <property type="molecule type" value="Genomic_DNA"/>
</dbReference>
<dbReference type="RefSeq" id="WP_011276129.1">
    <property type="nucleotide sequence ID" value="NC_007168.1"/>
</dbReference>
<dbReference type="SMR" id="Q4L5B3"/>
<dbReference type="KEGG" id="sha:SH1853"/>
<dbReference type="eggNOG" id="COG3842">
    <property type="taxonomic scope" value="Bacteria"/>
</dbReference>
<dbReference type="HOGENOM" id="CLU_000604_1_1_9"/>
<dbReference type="OrthoDB" id="9790614at2"/>
<dbReference type="Proteomes" id="UP000000543">
    <property type="component" value="Chromosome"/>
</dbReference>
<dbReference type="GO" id="GO:0043190">
    <property type="term" value="C:ATP-binding cassette (ABC) transporter complex"/>
    <property type="evidence" value="ECO:0007669"/>
    <property type="project" value="InterPro"/>
</dbReference>
<dbReference type="GO" id="GO:0015594">
    <property type="term" value="F:ABC-type putrescine transporter activity"/>
    <property type="evidence" value="ECO:0007669"/>
    <property type="project" value="InterPro"/>
</dbReference>
<dbReference type="GO" id="GO:0005524">
    <property type="term" value="F:ATP binding"/>
    <property type="evidence" value="ECO:0007669"/>
    <property type="project" value="UniProtKB-KW"/>
</dbReference>
<dbReference type="GO" id="GO:0016887">
    <property type="term" value="F:ATP hydrolysis activity"/>
    <property type="evidence" value="ECO:0007669"/>
    <property type="project" value="InterPro"/>
</dbReference>
<dbReference type="CDD" id="cd03300">
    <property type="entry name" value="ABC_PotA_N"/>
    <property type="match status" value="1"/>
</dbReference>
<dbReference type="FunFam" id="3.40.50.300:FF:000133">
    <property type="entry name" value="Spermidine/putrescine import ATP-binding protein PotA"/>
    <property type="match status" value="1"/>
</dbReference>
<dbReference type="Gene3D" id="2.40.50.100">
    <property type="match status" value="1"/>
</dbReference>
<dbReference type="Gene3D" id="3.40.50.300">
    <property type="entry name" value="P-loop containing nucleotide triphosphate hydrolases"/>
    <property type="match status" value="1"/>
</dbReference>
<dbReference type="InterPro" id="IPR003593">
    <property type="entry name" value="AAA+_ATPase"/>
</dbReference>
<dbReference type="InterPro" id="IPR050093">
    <property type="entry name" value="ABC_SmlMolc_Importer"/>
</dbReference>
<dbReference type="InterPro" id="IPR003439">
    <property type="entry name" value="ABC_transporter-like_ATP-bd"/>
</dbReference>
<dbReference type="InterPro" id="IPR017871">
    <property type="entry name" value="ABC_transporter-like_CS"/>
</dbReference>
<dbReference type="InterPro" id="IPR008995">
    <property type="entry name" value="Mo/tungstate-bd_C_term_dom"/>
</dbReference>
<dbReference type="InterPro" id="IPR027417">
    <property type="entry name" value="P-loop_NTPase"/>
</dbReference>
<dbReference type="InterPro" id="IPR017879">
    <property type="entry name" value="PotA_ATP-bd"/>
</dbReference>
<dbReference type="InterPro" id="IPR013611">
    <property type="entry name" value="Transp-assoc_OB_typ2"/>
</dbReference>
<dbReference type="PANTHER" id="PTHR42781">
    <property type="entry name" value="SPERMIDINE/PUTRESCINE IMPORT ATP-BINDING PROTEIN POTA"/>
    <property type="match status" value="1"/>
</dbReference>
<dbReference type="PANTHER" id="PTHR42781:SF4">
    <property type="entry name" value="SPERMIDINE_PUTRESCINE IMPORT ATP-BINDING PROTEIN POTA"/>
    <property type="match status" value="1"/>
</dbReference>
<dbReference type="Pfam" id="PF00005">
    <property type="entry name" value="ABC_tran"/>
    <property type="match status" value="1"/>
</dbReference>
<dbReference type="Pfam" id="PF08402">
    <property type="entry name" value="TOBE_2"/>
    <property type="match status" value="1"/>
</dbReference>
<dbReference type="SMART" id="SM00382">
    <property type="entry name" value="AAA"/>
    <property type="match status" value="1"/>
</dbReference>
<dbReference type="SUPFAM" id="SSF50331">
    <property type="entry name" value="MOP-like"/>
    <property type="match status" value="1"/>
</dbReference>
<dbReference type="SUPFAM" id="SSF52540">
    <property type="entry name" value="P-loop containing nucleoside triphosphate hydrolases"/>
    <property type="match status" value="1"/>
</dbReference>
<dbReference type="PROSITE" id="PS00211">
    <property type="entry name" value="ABC_TRANSPORTER_1"/>
    <property type="match status" value="1"/>
</dbReference>
<dbReference type="PROSITE" id="PS50893">
    <property type="entry name" value="ABC_TRANSPORTER_2"/>
    <property type="match status" value="1"/>
</dbReference>
<dbReference type="PROSITE" id="PS51305">
    <property type="entry name" value="POTA"/>
    <property type="match status" value="1"/>
</dbReference>
<proteinExistence type="inferred from homology"/>
<name>POTA_STAHJ</name>